<proteinExistence type="inferred from homology"/>
<organism>
    <name type="scientific">Brucella canis (strain ATCC 23365 / NCTC 10854 / RM-666)</name>
    <dbReference type="NCBI Taxonomy" id="483179"/>
    <lineage>
        <taxon>Bacteria</taxon>
        <taxon>Pseudomonadati</taxon>
        <taxon>Pseudomonadota</taxon>
        <taxon>Alphaproteobacteria</taxon>
        <taxon>Hyphomicrobiales</taxon>
        <taxon>Brucellaceae</taxon>
        <taxon>Brucella/Ochrobactrum group</taxon>
        <taxon>Brucella</taxon>
    </lineage>
</organism>
<feature type="chain" id="PRO_1000074609" description="Cysteine--tRNA ligase">
    <location>
        <begin position="1"/>
        <end position="506"/>
    </location>
</feature>
<feature type="short sequence motif" description="'HIGH' region">
    <location>
        <begin position="36"/>
        <end position="46"/>
    </location>
</feature>
<feature type="short sequence motif" description="'KMSKS' region">
    <location>
        <begin position="302"/>
        <end position="306"/>
    </location>
</feature>
<feature type="binding site" evidence="1">
    <location>
        <position position="34"/>
    </location>
    <ligand>
        <name>Zn(2+)</name>
        <dbReference type="ChEBI" id="CHEBI:29105"/>
    </ligand>
</feature>
<feature type="binding site" evidence="1">
    <location>
        <position position="230"/>
    </location>
    <ligand>
        <name>Zn(2+)</name>
        <dbReference type="ChEBI" id="CHEBI:29105"/>
    </ligand>
</feature>
<feature type="binding site" evidence="1">
    <location>
        <position position="269"/>
    </location>
    <ligand>
        <name>Zn(2+)</name>
        <dbReference type="ChEBI" id="CHEBI:29105"/>
    </ligand>
</feature>
<feature type="binding site" evidence="1">
    <location>
        <position position="273"/>
    </location>
    <ligand>
        <name>Zn(2+)</name>
        <dbReference type="ChEBI" id="CHEBI:29105"/>
    </ligand>
</feature>
<feature type="binding site" evidence="1">
    <location>
        <position position="305"/>
    </location>
    <ligand>
        <name>ATP</name>
        <dbReference type="ChEBI" id="CHEBI:30616"/>
    </ligand>
</feature>
<reference key="1">
    <citation type="submission" date="2007-10" db="EMBL/GenBank/DDBJ databases">
        <title>Brucella canis ATCC 23365 whole genome shotgun sequencing project.</title>
        <authorList>
            <person name="Setubal J.C."/>
            <person name="Bowns C."/>
            <person name="Boyle S."/>
            <person name="Crasta O.R."/>
            <person name="Czar M.J."/>
            <person name="Dharmanolla C."/>
            <person name="Gillespie J.J."/>
            <person name="Kenyon R.W."/>
            <person name="Lu J."/>
            <person name="Mane S."/>
            <person name="Mohapatra S."/>
            <person name="Nagrani S."/>
            <person name="Purkayastha A."/>
            <person name="Rajasimha H.K."/>
            <person name="Shallom J.M."/>
            <person name="Shallom S."/>
            <person name="Shukla M."/>
            <person name="Snyder E.E."/>
            <person name="Sobral B.W."/>
            <person name="Wattam A.R."/>
            <person name="Will R."/>
            <person name="Williams K."/>
            <person name="Yoo H."/>
            <person name="Bruce D."/>
            <person name="Detter C."/>
            <person name="Munk C."/>
            <person name="Brettin T.S."/>
        </authorList>
    </citation>
    <scope>NUCLEOTIDE SEQUENCE [LARGE SCALE GENOMIC DNA]</scope>
    <source>
        <strain>ATCC 23365 / NCTC 10854 / RM-666</strain>
    </source>
</reference>
<dbReference type="EC" id="6.1.1.16" evidence="1"/>
<dbReference type="EMBL" id="CP000872">
    <property type="protein sequence ID" value="ABX61762.1"/>
    <property type="molecule type" value="Genomic_DNA"/>
</dbReference>
<dbReference type="RefSeq" id="WP_004688175.1">
    <property type="nucleotide sequence ID" value="NC_010103.1"/>
</dbReference>
<dbReference type="SMR" id="A9MA50"/>
<dbReference type="GeneID" id="55590401"/>
<dbReference type="KEGG" id="bcs:BCAN_A0689"/>
<dbReference type="HOGENOM" id="CLU_013528_0_1_5"/>
<dbReference type="PhylomeDB" id="A9MA50"/>
<dbReference type="Proteomes" id="UP000001385">
    <property type="component" value="Chromosome I"/>
</dbReference>
<dbReference type="GO" id="GO:0005829">
    <property type="term" value="C:cytosol"/>
    <property type="evidence" value="ECO:0007669"/>
    <property type="project" value="TreeGrafter"/>
</dbReference>
<dbReference type="GO" id="GO:0005524">
    <property type="term" value="F:ATP binding"/>
    <property type="evidence" value="ECO:0007669"/>
    <property type="project" value="UniProtKB-UniRule"/>
</dbReference>
<dbReference type="GO" id="GO:0004817">
    <property type="term" value="F:cysteine-tRNA ligase activity"/>
    <property type="evidence" value="ECO:0007669"/>
    <property type="project" value="UniProtKB-UniRule"/>
</dbReference>
<dbReference type="GO" id="GO:0008270">
    <property type="term" value="F:zinc ion binding"/>
    <property type="evidence" value="ECO:0007669"/>
    <property type="project" value="UniProtKB-UniRule"/>
</dbReference>
<dbReference type="GO" id="GO:0006423">
    <property type="term" value="P:cysteinyl-tRNA aminoacylation"/>
    <property type="evidence" value="ECO:0007669"/>
    <property type="project" value="UniProtKB-UniRule"/>
</dbReference>
<dbReference type="CDD" id="cd00672">
    <property type="entry name" value="CysRS_core"/>
    <property type="match status" value="1"/>
</dbReference>
<dbReference type="Gene3D" id="1.20.120.1910">
    <property type="entry name" value="Cysteine-tRNA ligase, C-terminal anti-codon recognition domain"/>
    <property type="match status" value="1"/>
</dbReference>
<dbReference type="Gene3D" id="3.40.50.620">
    <property type="entry name" value="HUPs"/>
    <property type="match status" value="1"/>
</dbReference>
<dbReference type="HAMAP" id="MF_00041">
    <property type="entry name" value="Cys_tRNA_synth"/>
    <property type="match status" value="1"/>
</dbReference>
<dbReference type="InterPro" id="IPR015803">
    <property type="entry name" value="Cys-tRNA-ligase"/>
</dbReference>
<dbReference type="InterPro" id="IPR024909">
    <property type="entry name" value="Cys-tRNA/MSH_ligase"/>
</dbReference>
<dbReference type="InterPro" id="IPR014729">
    <property type="entry name" value="Rossmann-like_a/b/a_fold"/>
</dbReference>
<dbReference type="InterPro" id="IPR032678">
    <property type="entry name" value="tRNA-synt_1_cat_dom"/>
</dbReference>
<dbReference type="InterPro" id="IPR009080">
    <property type="entry name" value="tRNAsynth_Ia_anticodon-bd"/>
</dbReference>
<dbReference type="NCBIfam" id="TIGR00435">
    <property type="entry name" value="cysS"/>
    <property type="match status" value="1"/>
</dbReference>
<dbReference type="PANTHER" id="PTHR10890:SF3">
    <property type="entry name" value="CYSTEINE--TRNA LIGASE, CYTOPLASMIC"/>
    <property type="match status" value="1"/>
</dbReference>
<dbReference type="PANTHER" id="PTHR10890">
    <property type="entry name" value="CYSTEINYL-TRNA SYNTHETASE"/>
    <property type="match status" value="1"/>
</dbReference>
<dbReference type="Pfam" id="PF01406">
    <property type="entry name" value="tRNA-synt_1e"/>
    <property type="match status" value="1"/>
</dbReference>
<dbReference type="PRINTS" id="PR00983">
    <property type="entry name" value="TRNASYNTHCYS"/>
</dbReference>
<dbReference type="SUPFAM" id="SSF47323">
    <property type="entry name" value="Anticodon-binding domain of a subclass of class I aminoacyl-tRNA synthetases"/>
    <property type="match status" value="1"/>
</dbReference>
<dbReference type="SUPFAM" id="SSF52374">
    <property type="entry name" value="Nucleotidylyl transferase"/>
    <property type="match status" value="1"/>
</dbReference>
<evidence type="ECO:0000255" key="1">
    <source>
        <dbReference type="HAMAP-Rule" id="MF_00041"/>
    </source>
</evidence>
<sequence length="506" mass="56273">MPDTAPQLRLYNTLTRTKEAFAPIDAKNVRMYVCGPTVYDFAHIGNARPVIVFDVLFRLLRHVYGAQHVTYARNITDVDDKINARAARDYPDLPFNEAIRKVTESTNAQFQADVTALGNLQPTVQPRATEHMDEMRAMIDRLVQRGVAYVAQDHVLFSPSAMNARKGPRYGALARRSLDEMLAGARVDVASYKRDEMDFVLWKPSKKGEPGWPSPAGIETLGRPGWHIECSAMSMAKLLEPFGGGLKCDDPERNQFDIHGGGIDLVFPHHENEIAQSCCALGTERMANIWMHNGFLQVEGQKMSKSLGNFITIRDVLNDGLPQLGEWGDNTVRDRWAGLAARLSMLQTHYREPINWTAQRLAESADELHRWYGLLRDEGFGAPEKLSHASAVAAALCDDLNSWAAITALRQAFKVRDVAALGEGMALMGLLDPYFVTASDVPIFARADVDASAIAARIAERLNFINAKNWAEADRIRDELLQEGVQLKDSKDPATGERITTWDVVG</sequence>
<comment type="catalytic activity">
    <reaction evidence="1">
        <text>tRNA(Cys) + L-cysteine + ATP = L-cysteinyl-tRNA(Cys) + AMP + diphosphate</text>
        <dbReference type="Rhea" id="RHEA:17773"/>
        <dbReference type="Rhea" id="RHEA-COMP:9661"/>
        <dbReference type="Rhea" id="RHEA-COMP:9679"/>
        <dbReference type="ChEBI" id="CHEBI:30616"/>
        <dbReference type="ChEBI" id="CHEBI:33019"/>
        <dbReference type="ChEBI" id="CHEBI:35235"/>
        <dbReference type="ChEBI" id="CHEBI:78442"/>
        <dbReference type="ChEBI" id="CHEBI:78517"/>
        <dbReference type="ChEBI" id="CHEBI:456215"/>
        <dbReference type="EC" id="6.1.1.16"/>
    </reaction>
</comment>
<comment type="cofactor">
    <cofactor evidence="1">
        <name>Zn(2+)</name>
        <dbReference type="ChEBI" id="CHEBI:29105"/>
    </cofactor>
    <text evidence="1">Binds 1 zinc ion per subunit.</text>
</comment>
<comment type="subunit">
    <text evidence="1">Monomer.</text>
</comment>
<comment type="subcellular location">
    <subcellularLocation>
        <location evidence="1">Cytoplasm</location>
    </subcellularLocation>
</comment>
<comment type="similarity">
    <text evidence="1">Belongs to the class-I aminoacyl-tRNA synthetase family.</text>
</comment>
<keyword id="KW-0030">Aminoacyl-tRNA synthetase</keyword>
<keyword id="KW-0067">ATP-binding</keyword>
<keyword id="KW-0963">Cytoplasm</keyword>
<keyword id="KW-0436">Ligase</keyword>
<keyword id="KW-0479">Metal-binding</keyword>
<keyword id="KW-0547">Nucleotide-binding</keyword>
<keyword id="KW-0648">Protein biosynthesis</keyword>
<keyword id="KW-1185">Reference proteome</keyword>
<keyword id="KW-0862">Zinc</keyword>
<name>SYC_BRUC2</name>
<accession>A9MA50</accession>
<protein>
    <recommendedName>
        <fullName evidence="1">Cysteine--tRNA ligase</fullName>
        <ecNumber evidence="1">6.1.1.16</ecNumber>
    </recommendedName>
    <alternativeName>
        <fullName evidence="1">Cysteinyl-tRNA synthetase</fullName>
        <shortName evidence="1">CysRS</shortName>
    </alternativeName>
</protein>
<gene>
    <name evidence="1" type="primary">cysS</name>
    <name type="ordered locus">BCAN_A0689</name>
</gene>